<gene>
    <name type="ordered locus">msl4696</name>
</gene>
<reference key="1">
    <citation type="journal article" date="2000" name="DNA Res.">
        <title>Complete genome structure of the nitrogen-fixing symbiotic bacterium Mesorhizobium loti.</title>
        <authorList>
            <person name="Kaneko T."/>
            <person name="Nakamura Y."/>
            <person name="Sato S."/>
            <person name="Asamizu E."/>
            <person name="Kato T."/>
            <person name="Sasamoto S."/>
            <person name="Watanabe A."/>
            <person name="Idesawa K."/>
            <person name="Ishikawa A."/>
            <person name="Kawashima K."/>
            <person name="Kimura T."/>
            <person name="Kishida Y."/>
            <person name="Kiyokawa C."/>
            <person name="Kohara M."/>
            <person name="Matsumoto M."/>
            <person name="Matsuno A."/>
            <person name="Mochizuki Y."/>
            <person name="Nakayama S."/>
            <person name="Nakazaki N."/>
            <person name="Shimpo S."/>
            <person name="Sugimoto M."/>
            <person name="Takeuchi C."/>
            <person name="Yamada M."/>
            <person name="Tabata S."/>
        </authorList>
    </citation>
    <scope>NUCLEOTIDE SEQUENCE [LARGE SCALE GENOMIC DNA]</scope>
    <source>
        <strain>LMG 29417 / CECT 9101 / MAFF 303099</strain>
    </source>
</reference>
<evidence type="ECO:0000305" key="1"/>
<feature type="chain" id="PRO_0000218145" description="UPF0339 protein Msl4696">
    <location>
        <begin position="1"/>
        <end position="58"/>
    </location>
</feature>
<comment type="similarity">
    <text evidence="1">Belongs to the UPF0339 family.</text>
</comment>
<proteinExistence type="inferred from homology"/>
<dbReference type="EMBL" id="BA000012">
    <property type="protein sequence ID" value="BAB51291.1"/>
    <property type="molecule type" value="Genomic_DNA"/>
</dbReference>
<dbReference type="RefSeq" id="WP_010912633.1">
    <property type="nucleotide sequence ID" value="NC_002678.2"/>
</dbReference>
<dbReference type="SMR" id="Q98DI0"/>
<dbReference type="KEGG" id="mlo:msl4696"/>
<dbReference type="eggNOG" id="COG3422">
    <property type="taxonomic scope" value="Bacteria"/>
</dbReference>
<dbReference type="HOGENOM" id="CLU_163886_1_1_5"/>
<dbReference type="Proteomes" id="UP000000552">
    <property type="component" value="Chromosome"/>
</dbReference>
<dbReference type="Gene3D" id="2.30.29.80">
    <property type="match status" value="1"/>
</dbReference>
<dbReference type="InterPro" id="IPR010879">
    <property type="entry name" value="DUF1508"/>
</dbReference>
<dbReference type="InterPro" id="IPR036913">
    <property type="entry name" value="YegP-like_sf"/>
</dbReference>
<dbReference type="Pfam" id="PF07411">
    <property type="entry name" value="DUF1508"/>
    <property type="match status" value="1"/>
</dbReference>
<dbReference type="SUPFAM" id="SSF160113">
    <property type="entry name" value="YegP-like"/>
    <property type="match status" value="1"/>
</dbReference>
<organism>
    <name type="scientific">Mesorhizobium japonicum (strain LMG 29417 / CECT 9101 / MAFF 303099)</name>
    <name type="common">Mesorhizobium loti (strain MAFF 303099)</name>
    <dbReference type="NCBI Taxonomy" id="266835"/>
    <lineage>
        <taxon>Bacteria</taxon>
        <taxon>Pseudomonadati</taxon>
        <taxon>Pseudomonadota</taxon>
        <taxon>Alphaproteobacteria</taxon>
        <taxon>Hyphomicrobiales</taxon>
        <taxon>Phyllobacteriaceae</taxon>
        <taxon>Mesorhizobium</taxon>
    </lineage>
</organism>
<protein>
    <recommendedName>
        <fullName>UPF0339 protein Msl4696</fullName>
    </recommendedName>
</protein>
<name>YAG6_RHILO</name>
<sequence>MAHKFEIYKDKAGEYRVRFKYNSEVMFSTEGYSTKAGAQNAIDSIKKNGPNAPVEDNS</sequence>
<accession>Q98DI0</accession>